<feature type="chain" id="PRO_1000189710" description="Fluoride-specific ion channel FluC">
    <location>
        <begin position="1"/>
        <end position="128"/>
    </location>
</feature>
<feature type="transmembrane region" description="Helical" evidence="1">
    <location>
        <begin position="5"/>
        <end position="25"/>
    </location>
</feature>
<feature type="transmembrane region" description="Helical" evidence="1">
    <location>
        <begin position="35"/>
        <end position="55"/>
    </location>
</feature>
<feature type="transmembrane region" description="Helical" evidence="1">
    <location>
        <begin position="67"/>
        <end position="87"/>
    </location>
</feature>
<feature type="transmembrane region" description="Helical" evidence="1">
    <location>
        <begin position="96"/>
        <end position="116"/>
    </location>
</feature>
<feature type="binding site" evidence="1">
    <location>
        <position position="75"/>
    </location>
    <ligand>
        <name>Na(+)</name>
        <dbReference type="ChEBI" id="CHEBI:29101"/>
        <note>structural</note>
    </ligand>
</feature>
<feature type="binding site" evidence="1">
    <location>
        <position position="78"/>
    </location>
    <ligand>
        <name>Na(+)</name>
        <dbReference type="ChEBI" id="CHEBI:29101"/>
        <note>structural</note>
    </ligand>
</feature>
<keyword id="KW-0997">Cell inner membrane</keyword>
<keyword id="KW-1003">Cell membrane</keyword>
<keyword id="KW-0407">Ion channel</keyword>
<keyword id="KW-0406">Ion transport</keyword>
<keyword id="KW-0472">Membrane</keyword>
<keyword id="KW-0479">Metal-binding</keyword>
<keyword id="KW-0915">Sodium</keyword>
<keyword id="KW-0812">Transmembrane</keyword>
<keyword id="KW-1133">Transmembrane helix</keyword>
<keyword id="KW-0813">Transport</keyword>
<protein>
    <recommendedName>
        <fullName evidence="1">Fluoride-specific ion channel FluC</fullName>
    </recommendedName>
</protein>
<dbReference type="EMBL" id="CP001025">
    <property type="protein sequence ID" value="ACB63309.1"/>
    <property type="molecule type" value="Genomic_DNA"/>
</dbReference>
<dbReference type="RefSeq" id="WP_012363265.1">
    <property type="nucleotide sequence ID" value="NC_010551.1"/>
</dbReference>
<dbReference type="SMR" id="B1YUI2"/>
<dbReference type="KEGG" id="bac:BamMC406_0816"/>
<dbReference type="HOGENOM" id="CLU_114342_3_3_4"/>
<dbReference type="OrthoDB" id="9806299at2"/>
<dbReference type="Proteomes" id="UP000001680">
    <property type="component" value="Chromosome 1"/>
</dbReference>
<dbReference type="GO" id="GO:0005886">
    <property type="term" value="C:plasma membrane"/>
    <property type="evidence" value="ECO:0007669"/>
    <property type="project" value="UniProtKB-SubCell"/>
</dbReference>
<dbReference type="GO" id="GO:0062054">
    <property type="term" value="F:fluoride channel activity"/>
    <property type="evidence" value="ECO:0007669"/>
    <property type="project" value="UniProtKB-UniRule"/>
</dbReference>
<dbReference type="GO" id="GO:0046872">
    <property type="term" value="F:metal ion binding"/>
    <property type="evidence" value="ECO:0007669"/>
    <property type="project" value="UniProtKB-KW"/>
</dbReference>
<dbReference type="GO" id="GO:0140114">
    <property type="term" value="P:cellular detoxification of fluoride"/>
    <property type="evidence" value="ECO:0007669"/>
    <property type="project" value="UniProtKB-UniRule"/>
</dbReference>
<dbReference type="HAMAP" id="MF_00454">
    <property type="entry name" value="FluC"/>
    <property type="match status" value="1"/>
</dbReference>
<dbReference type="InterPro" id="IPR003691">
    <property type="entry name" value="FluC"/>
</dbReference>
<dbReference type="NCBIfam" id="TIGR00494">
    <property type="entry name" value="crcB"/>
    <property type="match status" value="1"/>
</dbReference>
<dbReference type="NCBIfam" id="NF010792">
    <property type="entry name" value="PRK14196.1"/>
    <property type="match status" value="1"/>
</dbReference>
<dbReference type="PANTHER" id="PTHR28259">
    <property type="entry name" value="FLUORIDE EXPORT PROTEIN 1-RELATED"/>
    <property type="match status" value="1"/>
</dbReference>
<dbReference type="PANTHER" id="PTHR28259:SF1">
    <property type="entry name" value="FLUORIDE EXPORT PROTEIN 1-RELATED"/>
    <property type="match status" value="1"/>
</dbReference>
<dbReference type="Pfam" id="PF02537">
    <property type="entry name" value="CRCB"/>
    <property type="match status" value="1"/>
</dbReference>
<proteinExistence type="inferred from homology"/>
<sequence>MFYSIVAIFVGAGFGAVLRWFLALALNEFFPAVPLGTLAANLIGGYVIGVAAVVFTARVGLPPEWRLFVITGFLGGLTTFSTYSVEVMTHAVQGEFGWAIAVAALHLTGSFTLTALGMWTARAWFAAA</sequence>
<name>FLUC_BURA4</name>
<comment type="function">
    <text evidence="1">Fluoride-specific ion channel. Important for reducing fluoride concentration in the cell, thus reducing its toxicity.</text>
</comment>
<comment type="catalytic activity">
    <reaction evidence="1">
        <text>fluoride(in) = fluoride(out)</text>
        <dbReference type="Rhea" id="RHEA:76159"/>
        <dbReference type="ChEBI" id="CHEBI:17051"/>
    </reaction>
    <physiologicalReaction direction="left-to-right" evidence="1">
        <dbReference type="Rhea" id="RHEA:76160"/>
    </physiologicalReaction>
</comment>
<comment type="activity regulation">
    <text evidence="1">Na(+) is not transported, but it plays an essential structural role and its presence is essential for fluoride channel function.</text>
</comment>
<comment type="subcellular location">
    <subcellularLocation>
        <location evidence="1">Cell inner membrane</location>
        <topology evidence="1">Multi-pass membrane protein</topology>
    </subcellularLocation>
</comment>
<comment type="similarity">
    <text evidence="1">Belongs to the fluoride channel Fluc/FEX (TC 1.A.43) family.</text>
</comment>
<organism>
    <name type="scientific">Burkholderia ambifaria (strain MC40-6)</name>
    <dbReference type="NCBI Taxonomy" id="398577"/>
    <lineage>
        <taxon>Bacteria</taxon>
        <taxon>Pseudomonadati</taxon>
        <taxon>Pseudomonadota</taxon>
        <taxon>Betaproteobacteria</taxon>
        <taxon>Burkholderiales</taxon>
        <taxon>Burkholderiaceae</taxon>
        <taxon>Burkholderia</taxon>
        <taxon>Burkholderia cepacia complex</taxon>
    </lineage>
</organism>
<accession>B1YUI2</accession>
<gene>
    <name evidence="1" type="primary">fluC</name>
    <name evidence="1" type="synonym">crcB</name>
    <name type="ordered locus">BamMC406_0816</name>
</gene>
<reference key="1">
    <citation type="submission" date="2008-04" db="EMBL/GenBank/DDBJ databases">
        <title>Complete sequence of chromosome 1 of Burkholderia ambifaria MC40-6.</title>
        <authorList>
            <person name="Copeland A."/>
            <person name="Lucas S."/>
            <person name="Lapidus A."/>
            <person name="Glavina del Rio T."/>
            <person name="Dalin E."/>
            <person name="Tice H."/>
            <person name="Pitluck S."/>
            <person name="Chain P."/>
            <person name="Malfatti S."/>
            <person name="Shin M."/>
            <person name="Vergez L."/>
            <person name="Lang D."/>
            <person name="Schmutz J."/>
            <person name="Larimer F."/>
            <person name="Land M."/>
            <person name="Hauser L."/>
            <person name="Kyrpides N."/>
            <person name="Lykidis A."/>
            <person name="Ramette A."/>
            <person name="Konstantinidis K."/>
            <person name="Tiedje J."/>
            <person name="Richardson P."/>
        </authorList>
    </citation>
    <scope>NUCLEOTIDE SEQUENCE [LARGE SCALE GENOMIC DNA]</scope>
    <source>
        <strain>MC40-6</strain>
    </source>
</reference>
<evidence type="ECO:0000255" key="1">
    <source>
        <dbReference type="HAMAP-Rule" id="MF_00454"/>
    </source>
</evidence>